<protein>
    <recommendedName>
        <fullName evidence="1">Flagellar transcriptional regulator FlhD</fullName>
    </recommendedName>
</protein>
<dbReference type="EMBL" id="CP000243">
    <property type="protein sequence ID" value="ABE07571.1"/>
    <property type="molecule type" value="Genomic_DNA"/>
</dbReference>
<dbReference type="SMR" id="Q1RAP3"/>
<dbReference type="KEGG" id="eci:UTI89_C2095"/>
<dbReference type="HOGENOM" id="CLU_144160_0_0_6"/>
<dbReference type="Proteomes" id="UP000001952">
    <property type="component" value="Chromosome"/>
</dbReference>
<dbReference type="GO" id="GO:0005737">
    <property type="term" value="C:cytoplasm"/>
    <property type="evidence" value="ECO:0007669"/>
    <property type="project" value="UniProtKB-SubCell"/>
</dbReference>
<dbReference type="GO" id="GO:0003677">
    <property type="term" value="F:DNA binding"/>
    <property type="evidence" value="ECO:0007669"/>
    <property type="project" value="UniProtKB-UniRule"/>
</dbReference>
<dbReference type="GO" id="GO:0044780">
    <property type="term" value="P:bacterial-type flagellum assembly"/>
    <property type="evidence" value="ECO:0007669"/>
    <property type="project" value="InterPro"/>
</dbReference>
<dbReference type="GO" id="GO:0045893">
    <property type="term" value="P:positive regulation of DNA-templated transcription"/>
    <property type="evidence" value="ECO:0007669"/>
    <property type="project" value="InterPro"/>
</dbReference>
<dbReference type="GO" id="GO:1902208">
    <property type="term" value="P:regulation of bacterial-type flagellum assembly"/>
    <property type="evidence" value="ECO:0007669"/>
    <property type="project" value="UniProtKB-UniRule"/>
</dbReference>
<dbReference type="FunFam" id="1.10.4000.10:FF:000001">
    <property type="entry name" value="Flagellar transcriptional regulator FlhD"/>
    <property type="match status" value="1"/>
</dbReference>
<dbReference type="Gene3D" id="1.10.4000.10">
    <property type="entry name" value="Flagellar transcriptional activator FlhD"/>
    <property type="match status" value="1"/>
</dbReference>
<dbReference type="HAMAP" id="MF_00725">
    <property type="entry name" value="FlhD"/>
    <property type="match status" value="1"/>
</dbReference>
<dbReference type="InterPro" id="IPR023559">
    <property type="entry name" value="Flagellar_FlhD"/>
</dbReference>
<dbReference type="InterPro" id="IPR036194">
    <property type="entry name" value="FlhD_sf"/>
</dbReference>
<dbReference type="NCBIfam" id="NF002783">
    <property type="entry name" value="PRK02909.1-1"/>
    <property type="match status" value="1"/>
</dbReference>
<dbReference type="Pfam" id="PF05247">
    <property type="entry name" value="FlhD"/>
    <property type="match status" value="1"/>
</dbReference>
<dbReference type="SUPFAM" id="SSF63592">
    <property type="entry name" value="Flagellar transcriptional activator FlhD"/>
    <property type="match status" value="1"/>
</dbReference>
<gene>
    <name evidence="1" type="primary">flhD</name>
    <name type="ordered locus">UTI89_C2095</name>
</gene>
<proteinExistence type="inferred from homology"/>
<comment type="function">
    <text evidence="1">Functions in complex with FlhC as a master transcriptional regulator that regulates transcription of several flagellar and non-flagellar operons by binding to their promoter region. Activates expression of class 2 flagellar genes, including fliA, which is a flagellum-specific sigma factor that turns on the class 3 genes. Also regulates genes whose products function in a variety of physiological pathways.</text>
</comment>
<comment type="subunit">
    <text evidence="1">Homodimer; disulfide-linked. Forms a heterohexamer composed of two FlhC and four FlhD subunits. Each FlhC binds a FlhD dimer, forming a heterotrimer, and a hexamer assembles by dimerization of two heterotrimers.</text>
</comment>
<comment type="subcellular location">
    <subcellularLocation>
        <location evidence="1">Cytoplasm</location>
    </subcellularLocation>
</comment>
<comment type="domain">
    <text evidence="1">The C-terminal region contains a putative helix-turn-helix (HTH) motif, suggesting that this region may bind DNA.</text>
</comment>
<comment type="similarity">
    <text evidence="1">Belongs to the FlhD family.</text>
</comment>
<sequence>MGIMHTSELLKHIYDINLSYLLLAQRLIVQDKASAMFRLGINEEMATTLAALTLPQMVKLAETNQLVCHFRFDSHQTITQLTQDSRVDDLQQIHTGIMLSTRLLNDVNQPEEALRKKRA</sequence>
<organism>
    <name type="scientific">Escherichia coli (strain UTI89 / UPEC)</name>
    <dbReference type="NCBI Taxonomy" id="364106"/>
    <lineage>
        <taxon>Bacteria</taxon>
        <taxon>Pseudomonadati</taxon>
        <taxon>Pseudomonadota</taxon>
        <taxon>Gammaproteobacteria</taxon>
        <taxon>Enterobacterales</taxon>
        <taxon>Enterobacteriaceae</taxon>
        <taxon>Escherichia</taxon>
    </lineage>
</organism>
<evidence type="ECO:0000255" key="1">
    <source>
        <dbReference type="HAMAP-Rule" id="MF_00725"/>
    </source>
</evidence>
<feature type="chain" id="PRO_1000062100" description="Flagellar transcriptional regulator FlhD">
    <location>
        <begin position="1"/>
        <end position="119"/>
    </location>
</feature>
<feature type="disulfide bond" description="Interchain" evidence="1">
    <location>
        <position position="68"/>
    </location>
</feature>
<accession>Q1RAP3</accession>
<name>FLHD_ECOUT</name>
<reference key="1">
    <citation type="journal article" date="2006" name="Proc. Natl. Acad. Sci. U.S.A.">
        <title>Identification of genes subject to positive selection in uropathogenic strains of Escherichia coli: a comparative genomics approach.</title>
        <authorList>
            <person name="Chen S.L."/>
            <person name="Hung C.-S."/>
            <person name="Xu J."/>
            <person name="Reigstad C.S."/>
            <person name="Magrini V."/>
            <person name="Sabo A."/>
            <person name="Blasiar D."/>
            <person name="Bieri T."/>
            <person name="Meyer R.R."/>
            <person name="Ozersky P."/>
            <person name="Armstrong J.R."/>
            <person name="Fulton R.S."/>
            <person name="Latreille J.P."/>
            <person name="Spieth J."/>
            <person name="Hooton T.M."/>
            <person name="Mardis E.R."/>
            <person name="Hultgren S.J."/>
            <person name="Gordon J.I."/>
        </authorList>
    </citation>
    <scope>NUCLEOTIDE SEQUENCE [LARGE SCALE GENOMIC DNA]</scope>
    <source>
        <strain>UTI89 / UPEC</strain>
    </source>
</reference>
<keyword id="KW-0010">Activator</keyword>
<keyword id="KW-1005">Bacterial flagellum biogenesis</keyword>
<keyword id="KW-0963">Cytoplasm</keyword>
<keyword id="KW-1015">Disulfide bond</keyword>
<keyword id="KW-0238">DNA-binding</keyword>
<keyword id="KW-0804">Transcription</keyword>
<keyword id="KW-0805">Transcription regulation</keyword>